<evidence type="ECO:0000255" key="1">
    <source>
        <dbReference type="HAMAP-Rule" id="MF_00096"/>
    </source>
</evidence>
<sequence>MLTQEDFRNKYQYHQATPMLQQYLDIKFTHQCCILLFRVGDFYELFFDDAIVVSKLLGLVLAKKGKHAGQDLPMCGIPYHALESYLPRLVEQEHKVALCEQLESPEEAKKRNGYKAVVKREVVRILTSGTITEESLIKANAPNYLAAIVIYKDIASIGYCDVSTAEFIVIDVSIHNLTSELSRINPKEIILSESLQHNSSLLALFDNYKQKIVYQVESYFSFNKAQRTIQNYYEIITIDSIGSLNSTQVSVVGAILEYLSIVQKHSKSKLPFPQIVSYENFMLIDASARKNLELTSTLSGNLKGSLLSVIDATVTNQGGRLLHKFLSTPLAEVNLINSRLQITDFFYQNLQLVENLRELVKLVPDIERALSRILIAKALPKDLESIKISLKIALSIKKELNKVLEEENIPKYLEEIYNPLFGDDELYDLLDSALLDDLSNSANDGGFIKSSYSTKLEELRNLIYNSSHFIEQLKLQYRQETCIETLKICHNNVWGMFIEVSSKNAHKITDSKFVHKQTTTTAVRFTTTELQTLEAKMLNAKTMAAALEQEILAELCKAISLKSEKLSHLAKSISLIDVFCNFAYISHEFNYCRPEITSDLAFNIVNGRHTVIEKLITKKHESFISNDCNLQNDQRIWLITGPNMAGKSTFLRQNAIIVILAQIGCYVPAQSAQIGVVDKLFSRIGAADDLASGQSTFMVEMVETSVILAQSTFRSLVILDEIGRGTSTYDGISIAWSCLEYIHSNIRCRCLFATHYHELVDLASKLQSLKNFTVKIHDSNDKLSFLYKIIEGAANKSYGIHVAELAGLPRIVLNRAKEILLELEHNKADINQSNNNITKSMDIAVPPYPVKTIEIIKQLNPDQLTPKEALSIIYKIKNTILLEEDEKMI</sequence>
<feature type="chain" id="PRO_1000093636" description="DNA mismatch repair protein MutS">
    <location>
        <begin position="1"/>
        <end position="889"/>
    </location>
</feature>
<feature type="binding site" evidence="1">
    <location>
        <begin position="641"/>
        <end position="648"/>
    </location>
    <ligand>
        <name>ATP</name>
        <dbReference type="ChEBI" id="CHEBI:30616"/>
    </ligand>
</feature>
<reference key="1">
    <citation type="journal article" date="2008" name="DNA Res.">
        <title>The whole-genome sequencing of the obligate intracellular bacterium Orientia tsutsugamushi revealed massive gene amplification during reductive genome evolution.</title>
        <authorList>
            <person name="Nakayama K."/>
            <person name="Yamashita A."/>
            <person name="Kurokawa K."/>
            <person name="Morimoto T."/>
            <person name="Ogawa M."/>
            <person name="Fukuhara M."/>
            <person name="Urakami H."/>
            <person name="Ohnishi M."/>
            <person name="Uchiyama I."/>
            <person name="Ogura Y."/>
            <person name="Ooka T."/>
            <person name="Oshima K."/>
            <person name="Tamura A."/>
            <person name="Hattori M."/>
            <person name="Hayashi T."/>
        </authorList>
    </citation>
    <scope>NUCLEOTIDE SEQUENCE [LARGE SCALE GENOMIC DNA]</scope>
    <source>
        <strain>Ikeda</strain>
    </source>
</reference>
<dbReference type="EMBL" id="AP008981">
    <property type="protein sequence ID" value="BAG39889.1"/>
    <property type="molecule type" value="Genomic_DNA"/>
</dbReference>
<dbReference type="RefSeq" id="WP_012461104.1">
    <property type="nucleotide sequence ID" value="NC_010793.1"/>
</dbReference>
<dbReference type="SMR" id="B3CQY2"/>
<dbReference type="KEGG" id="ott:OTT_0431"/>
<dbReference type="HOGENOM" id="CLU_002472_4_0_5"/>
<dbReference type="OrthoDB" id="9802448at2"/>
<dbReference type="Proteomes" id="UP000001033">
    <property type="component" value="Chromosome"/>
</dbReference>
<dbReference type="GO" id="GO:0005524">
    <property type="term" value="F:ATP binding"/>
    <property type="evidence" value="ECO:0007669"/>
    <property type="project" value="UniProtKB-UniRule"/>
</dbReference>
<dbReference type="GO" id="GO:0140664">
    <property type="term" value="F:ATP-dependent DNA damage sensor activity"/>
    <property type="evidence" value="ECO:0007669"/>
    <property type="project" value="InterPro"/>
</dbReference>
<dbReference type="GO" id="GO:0003684">
    <property type="term" value="F:damaged DNA binding"/>
    <property type="evidence" value="ECO:0007669"/>
    <property type="project" value="UniProtKB-UniRule"/>
</dbReference>
<dbReference type="GO" id="GO:0030983">
    <property type="term" value="F:mismatched DNA binding"/>
    <property type="evidence" value="ECO:0007669"/>
    <property type="project" value="InterPro"/>
</dbReference>
<dbReference type="GO" id="GO:0006298">
    <property type="term" value="P:mismatch repair"/>
    <property type="evidence" value="ECO:0007669"/>
    <property type="project" value="UniProtKB-UniRule"/>
</dbReference>
<dbReference type="CDD" id="cd03284">
    <property type="entry name" value="ABC_MutS1"/>
    <property type="match status" value="1"/>
</dbReference>
<dbReference type="FunFam" id="3.40.50.300:FF:001238">
    <property type="entry name" value="DNA mismatch repair protein"/>
    <property type="match status" value="1"/>
</dbReference>
<dbReference type="FunFam" id="3.40.1170.10:FF:000001">
    <property type="entry name" value="DNA mismatch repair protein MutS"/>
    <property type="match status" value="1"/>
</dbReference>
<dbReference type="Gene3D" id="1.10.1420.10">
    <property type="match status" value="2"/>
</dbReference>
<dbReference type="Gene3D" id="6.10.140.430">
    <property type="match status" value="1"/>
</dbReference>
<dbReference type="Gene3D" id="3.40.1170.10">
    <property type="entry name" value="DNA repair protein MutS, domain I"/>
    <property type="match status" value="1"/>
</dbReference>
<dbReference type="Gene3D" id="3.30.420.110">
    <property type="entry name" value="MutS, connector domain"/>
    <property type="match status" value="1"/>
</dbReference>
<dbReference type="Gene3D" id="3.40.50.300">
    <property type="entry name" value="P-loop containing nucleotide triphosphate hydrolases"/>
    <property type="match status" value="1"/>
</dbReference>
<dbReference type="HAMAP" id="MF_00096">
    <property type="entry name" value="MutS"/>
    <property type="match status" value="1"/>
</dbReference>
<dbReference type="InterPro" id="IPR005748">
    <property type="entry name" value="DNA_mismatch_repair_MutS"/>
</dbReference>
<dbReference type="InterPro" id="IPR007695">
    <property type="entry name" value="DNA_mismatch_repair_MutS-lik_N"/>
</dbReference>
<dbReference type="InterPro" id="IPR017261">
    <property type="entry name" value="DNA_mismatch_repair_MutS/MSH"/>
</dbReference>
<dbReference type="InterPro" id="IPR000432">
    <property type="entry name" value="DNA_mismatch_repair_MutS_C"/>
</dbReference>
<dbReference type="InterPro" id="IPR007861">
    <property type="entry name" value="DNA_mismatch_repair_MutS_clamp"/>
</dbReference>
<dbReference type="InterPro" id="IPR007696">
    <property type="entry name" value="DNA_mismatch_repair_MutS_core"/>
</dbReference>
<dbReference type="InterPro" id="IPR016151">
    <property type="entry name" value="DNA_mismatch_repair_MutS_N"/>
</dbReference>
<dbReference type="InterPro" id="IPR036187">
    <property type="entry name" value="DNA_mismatch_repair_MutS_sf"/>
</dbReference>
<dbReference type="InterPro" id="IPR007860">
    <property type="entry name" value="DNA_mmatch_repair_MutS_con_dom"/>
</dbReference>
<dbReference type="InterPro" id="IPR045076">
    <property type="entry name" value="MutS"/>
</dbReference>
<dbReference type="InterPro" id="IPR036678">
    <property type="entry name" value="MutS_con_dom_sf"/>
</dbReference>
<dbReference type="InterPro" id="IPR027417">
    <property type="entry name" value="P-loop_NTPase"/>
</dbReference>
<dbReference type="NCBIfam" id="TIGR01070">
    <property type="entry name" value="mutS1"/>
    <property type="match status" value="1"/>
</dbReference>
<dbReference type="NCBIfam" id="NF003810">
    <property type="entry name" value="PRK05399.1"/>
    <property type="match status" value="1"/>
</dbReference>
<dbReference type="PANTHER" id="PTHR11361:SF34">
    <property type="entry name" value="DNA MISMATCH REPAIR PROTEIN MSH1, MITOCHONDRIAL"/>
    <property type="match status" value="1"/>
</dbReference>
<dbReference type="PANTHER" id="PTHR11361">
    <property type="entry name" value="DNA MISMATCH REPAIR PROTEIN MUTS FAMILY MEMBER"/>
    <property type="match status" value="1"/>
</dbReference>
<dbReference type="Pfam" id="PF01624">
    <property type="entry name" value="MutS_I"/>
    <property type="match status" value="1"/>
</dbReference>
<dbReference type="Pfam" id="PF05188">
    <property type="entry name" value="MutS_II"/>
    <property type="match status" value="1"/>
</dbReference>
<dbReference type="Pfam" id="PF05192">
    <property type="entry name" value="MutS_III"/>
    <property type="match status" value="1"/>
</dbReference>
<dbReference type="Pfam" id="PF05190">
    <property type="entry name" value="MutS_IV"/>
    <property type="match status" value="1"/>
</dbReference>
<dbReference type="Pfam" id="PF00488">
    <property type="entry name" value="MutS_V"/>
    <property type="match status" value="1"/>
</dbReference>
<dbReference type="PIRSF" id="PIRSF037677">
    <property type="entry name" value="DNA_mis_repair_Msh6"/>
    <property type="match status" value="1"/>
</dbReference>
<dbReference type="SMART" id="SM00534">
    <property type="entry name" value="MUTSac"/>
    <property type="match status" value="1"/>
</dbReference>
<dbReference type="SMART" id="SM00533">
    <property type="entry name" value="MUTSd"/>
    <property type="match status" value="1"/>
</dbReference>
<dbReference type="SUPFAM" id="SSF55271">
    <property type="entry name" value="DNA repair protein MutS, domain I"/>
    <property type="match status" value="1"/>
</dbReference>
<dbReference type="SUPFAM" id="SSF53150">
    <property type="entry name" value="DNA repair protein MutS, domain II"/>
    <property type="match status" value="1"/>
</dbReference>
<dbReference type="SUPFAM" id="SSF48334">
    <property type="entry name" value="DNA repair protein MutS, domain III"/>
    <property type="match status" value="1"/>
</dbReference>
<dbReference type="SUPFAM" id="SSF52540">
    <property type="entry name" value="P-loop containing nucleoside triphosphate hydrolases"/>
    <property type="match status" value="1"/>
</dbReference>
<dbReference type="PROSITE" id="PS00486">
    <property type="entry name" value="DNA_MISMATCH_REPAIR_2"/>
    <property type="match status" value="1"/>
</dbReference>
<comment type="function">
    <text evidence="1">This protein is involved in the repair of mismatches in DNA. It is possible that it carries out the mismatch recognition step. This protein has a weak ATPase activity.</text>
</comment>
<comment type="similarity">
    <text evidence="1">Belongs to the DNA mismatch repair MutS family.</text>
</comment>
<accession>B3CQY2</accession>
<keyword id="KW-0067">ATP-binding</keyword>
<keyword id="KW-0227">DNA damage</keyword>
<keyword id="KW-0234">DNA repair</keyword>
<keyword id="KW-0238">DNA-binding</keyword>
<keyword id="KW-0547">Nucleotide-binding</keyword>
<gene>
    <name evidence="1" type="primary">mutS</name>
    <name type="ordered locus">OTT_0431</name>
</gene>
<organism>
    <name type="scientific">Orientia tsutsugamushi (strain Ikeda)</name>
    <name type="common">Rickettsia tsutsugamushi</name>
    <dbReference type="NCBI Taxonomy" id="334380"/>
    <lineage>
        <taxon>Bacteria</taxon>
        <taxon>Pseudomonadati</taxon>
        <taxon>Pseudomonadota</taxon>
        <taxon>Alphaproteobacteria</taxon>
        <taxon>Rickettsiales</taxon>
        <taxon>Rickettsiaceae</taxon>
        <taxon>Rickettsieae</taxon>
        <taxon>Orientia</taxon>
    </lineage>
</organism>
<protein>
    <recommendedName>
        <fullName evidence="1">DNA mismatch repair protein MutS</fullName>
    </recommendedName>
</protein>
<proteinExistence type="inferred from homology"/>
<name>MUTS_ORITI</name>